<reference key="1">
    <citation type="submission" date="1998-01" db="EMBL/GenBank/DDBJ databases">
        <authorList>
            <person name="Murphy M."/>
        </authorList>
    </citation>
    <scope>NUCLEOTIDE SEQUENCE [MRNA]</scope>
</reference>
<accession>O57561</accession>
<gene>
    <name type="primary">rpl18a</name>
</gene>
<sequence>MKASGTLREYKVVGRLLPSVKNPTPPLYRMRIFAPNHVVAKSRFWYFVSQLRKMKKANGETVYCGLVHEKTPLKVKNFGVWLRNDSRSGTHNMYREYRDLTTSAAVTQCYRDMGARHRARAHSIHIMKVQEIAANKCRRPAIKQFHDSKIKFPLPHRVLRRQHNPRFTTKRPNTFF</sequence>
<keyword id="KW-0963">Cytoplasm</keyword>
<keyword id="KW-1185">Reference proteome</keyword>
<keyword id="KW-0687">Ribonucleoprotein</keyword>
<keyword id="KW-0689">Ribosomal protein</keyword>
<organism>
    <name type="scientific">Salmo salar</name>
    <name type="common">Atlantic salmon</name>
    <dbReference type="NCBI Taxonomy" id="8030"/>
    <lineage>
        <taxon>Eukaryota</taxon>
        <taxon>Metazoa</taxon>
        <taxon>Chordata</taxon>
        <taxon>Craniata</taxon>
        <taxon>Vertebrata</taxon>
        <taxon>Euteleostomi</taxon>
        <taxon>Actinopterygii</taxon>
        <taxon>Neopterygii</taxon>
        <taxon>Teleostei</taxon>
        <taxon>Protacanthopterygii</taxon>
        <taxon>Salmoniformes</taxon>
        <taxon>Salmonidae</taxon>
        <taxon>Salmoninae</taxon>
        <taxon>Salmo</taxon>
    </lineage>
</organism>
<name>RL18A_SALSA</name>
<protein>
    <recommendedName>
        <fullName evidence="2">Large ribosomal subunit protein eL20</fullName>
    </recommendedName>
    <alternativeName>
        <fullName>60S ribosomal protein L18a</fullName>
    </alternativeName>
</protein>
<comment type="function">
    <text evidence="1">Component of the large ribosomal subunit. The ribosome is a large ribonucleoprotein complex responsible for the synthesis of proteins in the cell.</text>
</comment>
<comment type="subunit">
    <text evidence="1">Component of the large ribosomal subunit.</text>
</comment>
<comment type="subcellular location">
    <subcellularLocation>
        <location evidence="1">Cytoplasm</location>
    </subcellularLocation>
</comment>
<comment type="similarity">
    <text evidence="2">Belongs to the eukaryotic ribosomal protein eL20 family.</text>
</comment>
<dbReference type="EMBL" id="AF045188">
    <property type="protein sequence ID" value="AAC03021.1"/>
    <property type="molecule type" value="mRNA"/>
</dbReference>
<dbReference type="RefSeq" id="NP_001116999.1">
    <property type="nucleotide sequence ID" value="NM_001123527.1"/>
</dbReference>
<dbReference type="SMR" id="O57561"/>
<dbReference type="STRING" id="8030.ENSSSAP00000020658"/>
<dbReference type="PaxDb" id="8030-ENSSSAP00000010912"/>
<dbReference type="GeneID" id="100136354"/>
<dbReference type="KEGG" id="sasa:100136354"/>
<dbReference type="OrthoDB" id="141416at7898"/>
<dbReference type="Proteomes" id="UP000087266">
    <property type="component" value="Chromosome ssa07"/>
</dbReference>
<dbReference type="GO" id="GO:0005737">
    <property type="term" value="C:cytoplasm"/>
    <property type="evidence" value="ECO:0007669"/>
    <property type="project" value="UniProtKB-SubCell"/>
</dbReference>
<dbReference type="GO" id="GO:1990904">
    <property type="term" value="C:ribonucleoprotein complex"/>
    <property type="evidence" value="ECO:0007669"/>
    <property type="project" value="UniProtKB-KW"/>
</dbReference>
<dbReference type="GO" id="GO:0005840">
    <property type="term" value="C:ribosome"/>
    <property type="evidence" value="ECO:0007669"/>
    <property type="project" value="UniProtKB-KW"/>
</dbReference>
<dbReference type="GO" id="GO:0003735">
    <property type="term" value="F:structural constituent of ribosome"/>
    <property type="evidence" value="ECO:0007669"/>
    <property type="project" value="InterPro"/>
</dbReference>
<dbReference type="GO" id="GO:0006412">
    <property type="term" value="P:translation"/>
    <property type="evidence" value="ECO:0007669"/>
    <property type="project" value="InterPro"/>
</dbReference>
<dbReference type="FunFam" id="3.10.20.10:FF:000001">
    <property type="entry name" value="60S ribosomal protein L18a"/>
    <property type="match status" value="1"/>
</dbReference>
<dbReference type="FunFam" id="3.10.20.10:FF:000002">
    <property type="entry name" value="60S ribosomal protein L18a"/>
    <property type="match status" value="1"/>
</dbReference>
<dbReference type="Gene3D" id="3.10.20.10">
    <property type="match status" value="2"/>
</dbReference>
<dbReference type="HAMAP" id="MF_00273">
    <property type="entry name" value="Ribosomal_eL20"/>
    <property type="match status" value="1"/>
</dbReference>
<dbReference type="InterPro" id="IPR028877">
    <property type="entry name" value="Ribosomal_eL20"/>
</dbReference>
<dbReference type="InterPro" id="IPR023573">
    <property type="entry name" value="Ribosomal_eL20_dom"/>
</dbReference>
<dbReference type="InterPro" id="IPR021138">
    <property type="entry name" value="Ribosomal_eL20_eukaryotes"/>
</dbReference>
<dbReference type="PANTHER" id="PTHR10052">
    <property type="entry name" value="60S RIBOSOMAL PROTEIN L18A"/>
    <property type="match status" value="1"/>
</dbReference>
<dbReference type="Pfam" id="PF01775">
    <property type="entry name" value="Ribosomal_L18A"/>
    <property type="match status" value="1"/>
</dbReference>
<dbReference type="PIRSF" id="PIRSF002190">
    <property type="entry name" value="Ribosomal_L18a"/>
    <property type="match status" value="1"/>
</dbReference>
<dbReference type="SUPFAM" id="SSF160374">
    <property type="entry name" value="RplX-like"/>
    <property type="match status" value="1"/>
</dbReference>
<proteinExistence type="evidence at transcript level"/>
<evidence type="ECO:0000250" key="1">
    <source>
        <dbReference type="UniProtKB" id="Q02543"/>
    </source>
</evidence>
<evidence type="ECO:0000305" key="2"/>
<feature type="chain" id="PRO_0000213930" description="Large ribosomal subunit protein eL20">
    <location>
        <begin position="1"/>
        <end position="176"/>
    </location>
</feature>